<name>RS19_METEP</name>
<dbReference type="EMBL" id="CP000908">
    <property type="protein sequence ID" value="ABY30561.1"/>
    <property type="molecule type" value="Genomic_DNA"/>
</dbReference>
<dbReference type="RefSeq" id="WP_003597098.1">
    <property type="nucleotide sequence ID" value="NC_010172.1"/>
</dbReference>
<dbReference type="SMR" id="A9W4Q5"/>
<dbReference type="GeneID" id="72989854"/>
<dbReference type="KEGG" id="mex:Mext_2166"/>
<dbReference type="eggNOG" id="COG0185">
    <property type="taxonomic scope" value="Bacteria"/>
</dbReference>
<dbReference type="HOGENOM" id="CLU_144911_0_1_5"/>
<dbReference type="BioCyc" id="MEXT419610:MEXT_RS10935-MONOMER"/>
<dbReference type="GO" id="GO:0005737">
    <property type="term" value="C:cytoplasm"/>
    <property type="evidence" value="ECO:0007669"/>
    <property type="project" value="UniProtKB-ARBA"/>
</dbReference>
<dbReference type="GO" id="GO:0015935">
    <property type="term" value="C:small ribosomal subunit"/>
    <property type="evidence" value="ECO:0007669"/>
    <property type="project" value="InterPro"/>
</dbReference>
<dbReference type="GO" id="GO:0019843">
    <property type="term" value="F:rRNA binding"/>
    <property type="evidence" value="ECO:0007669"/>
    <property type="project" value="UniProtKB-UniRule"/>
</dbReference>
<dbReference type="GO" id="GO:0003735">
    <property type="term" value="F:structural constituent of ribosome"/>
    <property type="evidence" value="ECO:0007669"/>
    <property type="project" value="InterPro"/>
</dbReference>
<dbReference type="GO" id="GO:0000028">
    <property type="term" value="P:ribosomal small subunit assembly"/>
    <property type="evidence" value="ECO:0007669"/>
    <property type="project" value="TreeGrafter"/>
</dbReference>
<dbReference type="GO" id="GO:0006412">
    <property type="term" value="P:translation"/>
    <property type="evidence" value="ECO:0007669"/>
    <property type="project" value="UniProtKB-UniRule"/>
</dbReference>
<dbReference type="FunFam" id="3.30.860.10:FF:000001">
    <property type="entry name" value="30S ribosomal protein S19"/>
    <property type="match status" value="1"/>
</dbReference>
<dbReference type="Gene3D" id="3.30.860.10">
    <property type="entry name" value="30s Ribosomal Protein S19, Chain A"/>
    <property type="match status" value="1"/>
</dbReference>
<dbReference type="HAMAP" id="MF_00531">
    <property type="entry name" value="Ribosomal_uS19"/>
    <property type="match status" value="1"/>
</dbReference>
<dbReference type="InterPro" id="IPR002222">
    <property type="entry name" value="Ribosomal_uS19"/>
</dbReference>
<dbReference type="InterPro" id="IPR005732">
    <property type="entry name" value="Ribosomal_uS19_bac-type"/>
</dbReference>
<dbReference type="InterPro" id="IPR020934">
    <property type="entry name" value="Ribosomal_uS19_CS"/>
</dbReference>
<dbReference type="InterPro" id="IPR023575">
    <property type="entry name" value="Ribosomal_uS19_SF"/>
</dbReference>
<dbReference type="NCBIfam" id="TIGR01050">
    <property type="entry name" value="rpsS_bact"/>
    <property type="match status" value="1"/>
</dbReference>
<dbReference type="PANTHER" id="PTHR11880">
    <property type="entry name" value="RIBOSOMAL PROTEIN S19P FAMILY MEMBER"/>
    <property type="match status" value="1"/>
</dbReference>
<dbReference type="PANTHER" id="PTHR11880:SF8">
    <property type="entry name" value="SMALL RIBOSOMAL SUBUNIT PROTEIN US19M"/>
    <property type="match status" value="1"/>
</dbReference>
<dbReference type="Pfam" id="PF00203">
    <property type="entry name" value="Ribosomal_S19"/>
    <property type="match status" value="1"/>
</dbReference>
<dbReference type="PIRSF" id="PIRSF002144">
    <property type="entry name" value="Ribosomal_S19"/>
    <property type="match status" value="1"/>
</dbReference>
<dbReference type="PRINTS" id="PR00975">
    <property type="entry name" value="RIBOSOMALS19"/>
</dbReference>
<dbReference type="SUPFAM" id="SSF54570">
    <property type="entry name" value="Ribosomal protein S19"/>
    <property type="match status" value="1"/>
</dbReference>
<dbReference type="PROSITE" id="PS00323">
    <property type="entry name" value="RIBOSOMAL_S19"/>
    <property type="match status" value="1"/>
</dbReference>
<organism>
    <name type="scientific">Methylorubrum extorquens (strain PA1)</name>
    <name type="common">Methylobacterium extorquens</name>
    <dbReference type="NCBI Taxonomy" id="419610"/>
    <lineage>
        <taxon>Bacteria</taxon>
        <taxon>Pseudomonadati</taxon>
        <taxon>Pseudomonadota</taxon>
        <taxon>Alphaproteobacteria</taxon>
        <taxon>Hyphomicrobiales</taxon>
        <taxon>Methylobacteriaceae</taxon>
        <taxon>Methylorubrum</taxon>
    </lineage>
</organism>
<sequence>MARSLWKGPFVDGYLLKKADAARGGSRNEVVKIWSRRSTILPQFVGITFGVHNGHKHIPVYVTEEMVGHKFGEFSPTRTFPGHAADKKAKRR</sequence>
<comment type="function">
    <text evidence="1">Protein S19 forms a complex with S13 that binds strongly to the 16S ribosomal RNA.</text>
</comment>
<comment type="similarity">
    <text evidence="1">Belongs to the universal ribosomal protein uS19 family.</text>
</comment>
<gene>
    <name evidence="1" type="primary">rpsS</name>
    <name type="ordered locus">Mext_2166</name>
</gene>
<keyword id="KW-0687">Ribonucleoprotein</keyword>
<keyword id="KW-0689">Ribosomal protein</keyword>
<keyword id="KW-0694">RNA-binding</keyword>
<keyword id="KW-0699">rRNA-binding</keyword>
<accession>A9W4Q5</accession>
<feature type="chain" id="PRO_1000128000" description="Small ribosomal subunit protein uS19">
    <location>
        <begin position="1"/>
        <end position="92"/>
    </location>
</feature>
<evidence type="ECO:0000255" key="1">
    <source>
        <dbReference type="HAMAP-Rule" id="MF_00531"/>
    </source>
</evidence>
<evidence type="ECO:0000305" key="2"/>
<proteinExistence type="inferred from homology"/>
<protein>
    <recommendedName>
        <fullName evidence="1">Small ribosomal subunit protein uS19</fullName>
    </recommendedName>
    <alternativeName>
        <fullName evidence="2">30S ribosomal protein S19</fullName>
    </alternativeName>
</protein>
<reference key="1">
    <citation type="submission" date="2007-12" db="EMBL/GenBank/DDBJ databases">
        <title>Complete sequence of Methylobacterium extorquens PA1.</title>
        <authorList>
            <consortium name="US DOE Joint Genome Institute"/>
            <person name="Copeland A."/>
            <person name="Lucas S."/>
            <person name="Lapidus A."/>
            <person name="Barry K."/>
            <person name="Glavina del Rio T."/>
            <person name="Dalin E."/>
            <person name="Tice H."/>
            <person name="Pitluck S."/>
            <person name="Saunders E."/>
            <person name="Brettin T."/>
            <person name="Bruce D."/>
            <person name="Detter J.C."/>
            <person name="Han C."/>
            <person name="Schmutz J."/>
            <person name="Larimer F."/>
            <person name="Land M."/>
            <person name="Hauser L."/>
            <person name="Kyrpides N."/>
            <person name="Kim E."/>
            <person name="Marx C."/>
            <person name="Richardson P."/>
        </authorList>
    </citation>
    <scope>NUCLEOTIDE SEQUENCE [LARGE SCALE GENOMIC DNA]</scope>
    <source>
        <strain>PA1</strain>
    </source>
</reference>